<accession>Q9XNU0</accession>
<evidence type="ECO:0000250" key="1"/>
<evidence type="ECO:0000250" key="2">
    <source>
        <dbReference type="UniProtKB" id="P00157"/>
    </source>
</evidence>
<evidence type="ECO:0000255" key="3">
    <source>
        <dbReference type="PROSITE-ProRule" id="PRU00967"/>
    </source>
</evidence>
<evidence type="ECO:0000255" key="4">
    <source>
        <dbReference type="PROSITE-ProRule" id="PRU00968"/>
    </source>
</evidence>
<comment type="function">
    <text evidence="2">Component of the ubiquinol-cytochrome c reductase complex (complex III or cytochrome b-c1 complex) that is part of the mitochondrial respiratory chain. The b-c1 complex mediates electron transfer from ubiquinol to cytochrome c. Contributes to the generation of a proton gradient across the mitochondrial membrane that is then used for ATP synthesis.</text>
</comment>
<comment type="cofactor">
    <cofactor evidence="2">
        <name>heme b</name>
        <dbReference type="ChEBI" id="CHEBI:60344"/>
    </cofactor>
    <text evidence="2">Binds 2 heme b groups non-covalently.</text>
</comment>
<comment type="subunit">
    <text evidence="2">The cytochrome bc1 complex contains 11 subunits: 3 respiratory subunits (MT-CYB, CYC1 and UQCRFS1), 2 core proteins (UQCRC1 and UQCRC2) and 6 low-molecular weight proteins (UQCRH/QCR6, UQCRB/QCR7, UQCRQ/QCR8, UQCR10/QCR9, UQCR11/QCR10 and a cleavage product of UQCRFS1). This cytochrome bc1 complex then forms a dimer.</text>
</comment>
<comment type="subcellular location">
    <subcellularLocation>
        <location evidence="2">Mitochondrion inner membrane</location>
        <topology evidence="2">Multi-pass membrane protein</topology>
    </subcellularLocation>
</comment>
<comment type="miscellaneous">
    <text evidence="1">Heme 1 (or BL or b562) is low-potential and absorbs at about 562 nm, and heme 2 (or BH or b566) is high-potential and absorbs at about 566 nm.</text>
</comment>
<comment type="similarity">
    <text evidence="3 4">Belongs to the cytochrome b family.</text>
</comment>
<comment type="caution">
    <text evidence="2">The full-length protein contains only eight transmembrane helices, not nine as predicted by bioinformatics tools.</text>
</comment>
<gene>
    <name type="primary">MT-CYB</name>
    <name type="synonym">COB</name>
    <name type="synonym">CYTB</name>
    <name type="synonym">MTCYB</name>
</gene>
<proteinExistence type="inferred from homology"/>
<name>CYB_REIMX</name>
<geneLocation type="mitochondrion"/>
<protein>
    <recommendedName>
        <fullName>Cytochrome b</fullName>
    </recommendedName>
    <alternativeName>
        <fullName>Complex III subunit 3</fullName>
    </alternativeName>
    <alternativeName>
        <fullName>Complex III subunit III</fullName>
    </alternativeName>
    <alternativeName>
        <fullName>Cytochrome b-c1 complex subunit 3</fullName>
    </alternativeName>
    <alternativeName>
        <fullName>Ubiquinol-cytochrome-c reductase complex cytochrome b subunit</fullName>
    </alternativeName>
</protein>
<keyword id="KW-0249">Electron transport</keyword>
<keyword id="KW-0349">Heme</keyword>
<keyword id="KW-0408">Iron</keyword>
<keyword id="KW-0472">Membrane</keyword>
<keyword id="KW-0479">Metal-binding</keyword>
<keyword id="KW-0496">Mitochondrion</keyword>
<keyword id="KW-0999">Mitochondrion inner membrane</keyword>
<keyword id="KW-0679">Respiratory chain</keyword>
<keyword id="KW-0812">Transmembrane</keyword>
<keyword id="KW-1133">Transmembrane helix</keyword>
<keyword id="KW-0813">Transport</keyword>
<keyword id="KW-0830">Ubiquinone</keyword>
<sequence>MTNIRKKHPLLKIINDSFIDLPAPSNISSWWNFGSLLGICLIIQILTGLFLAMHYTSDTSTAFSSVTHICRDVNYGWLIRYMHANGASMFFICLFLHVGRGMYYGSYTFMETWNIGVILLFAVMATAFMGYVLPWGQMSFWGATVITNLLSAIPYIGTTLVEWIWGGFSVDKATLTRFFAFHFILPFIIAALVVVHLLFLHETGSNNPSGLNSDADKIPFHPYYTIKDILGVILLLMVLMTLVLFFPDILGDPDNYTPANPLNTPAHIKPEWYFLFAYAILRSIPNKLGGVLALILSILILAILPLLQTSKQRGLTFRPITQTLFWILAANLLVLTWIGGQPVEHPFILIGQLASISYFTIIIILMPVAGMIENNLLKFTH</sequence>
<feature type="chain" id="PRO_0000255125" description="Cytochrome b">
    <location>
        <begin position="1"/>
        <end position="381"/>
    </location>
</feature>
<feature type="transmembrane region" description="Helical" evidence="2">
    <location>
        <begin position="33"/>
        <end position="53"/>
    </location>
</feature>
<feature type="transmembrane region" description="Helical" evidence="2">
    <location>
        <begin position="77"/>
        <end position="98"/>
    </location>
</feature>
<feature type="transmembrane region" description="Helical" evidence="2">
    <location>
        <begin position="113"/>
        <end position="133"/>
    </location>
</feature>
<feature type="transmembrane region" description="Helical" evidence="2">
    <location>
        <begin position="178"/>
        <end position="198"/>
    </location>
</feature>
<feature type="transmembrane region" description="Helical" evidence="2">
    <location>
        <begin position="226"/>
        <end position="246"/>
    </location>
</feature>
<feature type="transmembrane region" description="Helical" evidence="2">
    <location>
        <begin position="288"/>
        <end position="308"/>
    </location>
</feature>
<feature type="transmembrane region" description="Helical" evidence="2">
    <location>
        <begin position="320"/>
        <end position="340"/>
    </location>
</feature>
<feature type="transmembrane region" description="Helical" evidence="2">
    <location>
        <begin position="347"/>
        <end position="367"/>
    </location>
</feature>
<feature type="binding site" description="axial binding residue" evidence="2">
    <location>
        <position position="83"/>
    </location>
    <ligand>
        <name>heme b</name>
        <dbReference type="ChEBI" id="CHEBI:60344"/>
        <label>b562</label>
    </ligand>
    <ligandPart>
        <name>Fe</name>
        <dbReference type="ChEBI" id="CHEBI:18248"/>
    </ligandPart>
</feature>
<feature type="binding site" description="axial binding residue" evidence="2">
    <location>
        <position position="97"/>
    </location>
    <ligand>
        <name>heme b</name>
        <dbReference type="ChEBI" id="CHEBI:60344"/>
        <label>b566</label>
    </ligand>
    <ligandPart>
        <name>Fe</name>
        <dbReference type="ChEBI" id="CHEBI:18248"/>
    </ligandPart>
</feature>
<feature type="binding site" description="axial binding residue" evidence="2">
    <location>
        <position position="182"/>
    </location>
    <ligand>
        <name>heme b</name>
        <dbReference type="ChEBI" id="CHEBI:60344"/>
        <label>b562</label>
    </ligand>
    <ligandPart>
        <name>Fe</name>
        <dbReference type="ChEBI" id="CHEBI:18248"/>
    </ligandPart>
</feature>
<feature type="binding site" description="axial binding residue" evidence="2">
    <location>
        <position position="196"/>
    </location>
    <ligand>
        <name>heme b</name>
        <dbReference type="ChEBI" id="CHEBI:60344"/>
        <label>b566</label>
    </ligand>
    <ligandPart>
        <name>Fe</name>
        <dbReference type="ChEBI" id="CHEBI:18248"/>
    </ligandPart>
</feature>
<feature type="binding site" evidence="2">
    <location>
        <position position="201"/>
    </location>
    <ligand>
        <name>a ubiquinone</name>
        <dbReference type="ChEBI" id="CHEBI:16389"/>
    </ligand>
</feature>
<reference key="1">
    <citation type="journal article" date="1999" name="J. Mammal. Evol.">
        <title>Phylogenetic relationships and the radiation of Sigmodontine rodents in South America: evidence from cytochrome b.</title>
        <authorList>
            <person name="Smith M.F."/>
            <person name="Patton J.L."/>
        </authorList>
    </citation>
    <scope>NUCLEOTIDE SEQUENCE [GENOMIC DNA]</scope>
</reference>
<dbReference type="EMBL" id="AF108708">
    <property type="protein sequence ID" value="AAD45490.1"/>
    <property type="molecule type" value="Genomic_DNA"/>
</dbReference>
<dbReference type="SMR" id="Q9XNU0"/>
<dbReference type="GO" id="GO:0005743">
    <property type="term" value="C:mitochondrial inner membrane"/>
    <property type="evidence" value="ECO:0007669"/>
    <property type="project" value="UniProtKB-SubCell"/>
</dbReference>
<dbReference type="GO" id="GO:0045275">
    <property type="term" value="C:respiratory chain complex III"/>
    <property type="evidence" value="ECO:0007669"/>
    <property type="project" value="InterPro"/>
</dbReference>
<dbReference type="GO" id="GO:0046872">
    <property type="term" value="F:metal ion binding"/>
    <property type="evidence" value="ECO:0007669"/>
    <property type="project" value="UniProtKB-KW"/>
</dbReference>
<dbReference type="GO" id="GO:0008121">
    <property type="term" value="F:ubiquinol-cytochrome-c reductase activity"/>
    <property type="evidence" value="ECO:0007669"/>
    <property type="project" value="InterPro"/>
</dbReference>
<dbReference type="GO" id="GO:0006122">
    <property type="term" value="P:mitochondrial electron transport, ubiquinol to cytochrome c"/>
    <property type="evidence" value="ECO:0007669"/>
    <property type="project" value="TreeGrafter"/>
</dbReference>
<dbReference type="CDD" id="cd00290">
    <property type="entry name" value="cytochrome_b_C"/>
    <property type="match status" value="1"/>
</dbReference>
<dbReference type="CDD" id="cd00284">
    <property type="entry name" value="Cytochrome_b_N"/>
    <property type="match status" value="1"/>
</dbReference>
<dbReference type="FunFam" id="1.20.810.10:FF:000002">
    <property type="entry name" value="Cytochrome b"/>
    <property type="match status" value="1"/>
</dbReference>
<dbReference type="Gene3D" id="1.20.810.10">
    <property type="entry name" value="Cytochrome Bc1 Complex, Chain C"/>
    <property type="match status" value="1"/>
</dbReference>
<dbReference type="InterPro" id="IPR005798">
    <property type="entry name" value="Cyt_b/b6_C"/>
</dbReference>
<dbReference type="InterPro" id="IPR036150">
    <property type="entry name" value="Cyt_b/b6_C_sf"/>
</dbReference>
<dbReference type="InterPro" id="IPR005797">
    <property type="entry name" value="Cyt_b/b6_N"/>
</dbReference>
<dbReference type="InterPro" id="IPR027387">
    <property type="entry name" value="Cytb/b6-like_sf"/>
</dbReference>
<dbReference type="InterPro" id="IPR030689">
    <property type="entry name" value="Cytochrome_b"/>
</dbReference>
<dbReference type="InterPro" id="IPR048260">
    <property type="entry name" value="Cytochrome_b_C_euk/bac"/>
</dbReference>
<dbReference type="InterPro" id="IPR048259">
    <property type="entry name" value="Cytochrome_b_N_euk/bac"/>
</dbReference>
<dbReference type="InterPro" id="IPR016174">
    <property type="entry name" value="Di-haem_cyt_TM"/>
</dbReference>
<dbReference type="PANTHER" id="PTHR19271">
    <property type="entry name" value="CYTOCHROME B"/>
    <property type="match status" value="1"/>
</dbReference>
<dbReference type="PANTHER" id="PTHR19271:SF16">
    <property type="entry name" value="CYTOCHROME B"/>
    <property type="match status" value="1"/>
</dbReference>
<dbReference type="Pfam" id="PF00032">
    <property type="entry name" value="Cytochrom_B_C"/>
    <property type="match status" value="1"/>
</dbReference>
<dbReference type="Pfam" id="PF00033">
    <property type="entry name" value="Cytochrome_B"/>
    <property type="match status" value="1"/>
</dbReference>
<dbReference type="PIRSF" id="PIRSF038885">
    <property type="entry name" value="COB"/>
    <property type="match status" value="1"/>
</dbReference>
<dbReference type="SUPFAM" id="SSF81648">
    <property type="entry name" value="a domain/subunit of cytochrome bc1 complex (Ubiquinol-cytochrome c reductase)"/>
    <property type="match status" value="1"/>
</dbReference>
<dbReference type="SUPFAM" id="SSF81342">
    <property type="entry name" value="Transmembrane di-heme cytochromes"/>
    <property type="match status" value="1"/>
</dbReference>
<dbReference type="PROSITE" id="PS51003">
    <property type="entry name" value="CYTB_CTER"/>
    <property type="match status" value="1"/>
</dbReference>
<dbReference type="PROSITE" id="PS51002">
    <property type="entry name" value="CYTB_NTER"/>
    <property type="match status" value="1"/>
</dbReference>
<organism>
    <name type="scientific">Reithrodontomys mexicanus</name>
    <name type="common">Mexican harvest mouse</name>
    <dbReference type="NCBI Taxonomy" id="89150"/>
    <lineage>
        <taxon>Eukaryota</taxon>
        <taxon>Metazoa</taxon>
        <taxon>Chordata</taxon>
        <taxon>Craniata</taxon>
        <taxon>Vertebrata</taxon>
        <taxon>Euteleostomi</taxon>
        <taxon>Mammalia</taxon>
        <taxon>Eutheria</taxon>
        <taxon>Euarchontoglires</taxon>
        <taxon>Glires</taxon>
        <taxon>Rodentia</taxon>
        <taxon>Myomorpha</taxon>
        <taxon>Muroidea</taxon>
        <taxon>Cricetidae</taxon>
        <taxon>Neotominae</taxon>
        <taxon>Reithrodontomys</taxon>
    </lineage>
</organism>